<keyword id="KW-0090">Biological rhythms</keyword>
<reference key="1">
    <citation type="journal article" date="2004" name="Nat. Struct. Mol. Biol.">
        <title>Crystal structure of the C-terminal clock-oscillator domain of the cyanobacterial KaiA protein.</title>
        <authorList>
            <person name="Uzumaki T."/>
            <person name="Fujita M."/>
            <person name="Nakatsu T."/>
            <person name="Hayashi F."/>
            <person name="Shibata H."/>
            <person name="Itoh N."/>
            <person name="Kato H."/>
            <person name="Ishiura M."/>
        </authorList>
    </citation>
    <scope>NUCLEOTIDE SEQUENCE [GENOMIC DNA]</scope>
</reference>
<accession>Q6L8K1</accession>
<protein>
    <recommendedName>
        <fullName evidence="5">Circadian clock oscillator protein KaiA</fullName>
    </recommendedName>
</protein>
<sequence>MAQSTALTICGLVYSPAIGQELVRLHTSDIDELVYFSSEREFCNYLEARRNSVACLILEWGEGTPQIITYLHHSATLLPAILIFPAAPAPPPAGPHYHIAEVILTTDQLDQLNRQIEEAITGFVKLCPGCAVPPHVLFRLPALKESSNVDPQHRLSQKLKERLGYLGVYYKRDTAFFFRRMSPADKRKLLDELRSIYRTIVLEYFNTDAKVNERIDEFVSKAFFADISVSQVLEIHVELMDTFSKQLKLEGRSEDILLDYRLTLIDVIAHLCEMYRRSIPREV</sequence>
<name>KAIA_THEVL</name>
<feature type="chain" id="PRO_0000217873" description="Circadian clock oscillator protein KaiA">
    <location>
        <begin position="1"/>
        <end position="283"/>
    </location>
</feature>
<feature type="domain" description="KaiA N-terminal" evidence="3">
    <location>
        <begin position="3"/>
        <end position="163"/>
    </location>
</feature>
<feature type="domain" description="KaiA C-terminal" evidence="4">
    <location>
        <begin position="173"/>
        <end position="281"/>
    </location>
</feature>
<feature type="region of interest" description="PsR domain, binds oxidized quinones" evidence="1">
    <location>
        <begin position="3"/>
        <end position="133"/>
    </location>
</feature>
<feature type="region of interest" description="Flexible linker" evidence="1">
    <location>
        <begin position="164"/>
        <end position="172"/>
    </location>
</feature>
<dbReference type="EMBL" id="AB121971">
    <property type="protein sequence ID" value="BAD21221.1"/>
    <property type="molecule type" value="Genomic_DNA"/>
</dbReference>
<dbReference type="BMRB" id="Q6L8K1"/>
<dbReference type="SMR" id="Q6L8K1"/>
<dbReference type="IntAct" id="Q6L8K1">
    <property type="interactions" value="1"/>
</dbReference>
<dbReference type="MINT" id="Q6L8K1"/>
<dbReference type="GO" id="GO:0007623">
    <property type="term" value="P:circadian rhythm"/>
    <property type="evidence" value="ECO:0007669"/>
    <property type="project" value="InterPro"/>
</dbReference>
<dbReference type="Gene3D" id="3.40.50.2300">
    <property type="match status" value="1"/>
</dbReference>
<dbReference type="Gene3D" id="1.10.1240.30">
    <property type="entry name" value="KaiA/RbsU domain"/>
    <property type="match status" value="1"/>
</dbReference>
<dbReference type="InterPro" id="IPR011006">
    <property type="entry name" value="CheY-like_superfamily"/>
</dbReference>
<dbReference type="InterPro" id="IPR011648">
    <property type="entry name" value="Circadian_clock_KaiA"/>
</dbReference>
<dbReference type="InterPro" id="IPR020844">
    <property type="entry name" value="Circadian_clock_KaiA_N"/>
</dbReference>
<dbReference type="InterPro" id="IPR020856">
    <property type="entry name" value="Circadian_clock_protein_KaiA_C"/>
</dbReference>
<dbReference type="InterPro" id="IPR017944">
    <property type="entry name" value="KaiA/RbsU_helical_domain_sf"/>
</dbReference>
<dbReference type="Pfam" id="PF07688">
    <property type="entry name" value="KaiA"/>
    <property type="match status" value="1"/>
</dbReference>
<dbReference type="Pfam" id="PF21714">
    <property type="entry name" value="KaiA_N"/>
    <property type="match status" value="1"/>
</dbReference>
<dbReference type="SMART" id="SM01247">
    <property type="entry name" value="KaiA"/>
    <property type="match status" value="1"/>
</dbReference>
<dbReference type="SUPFAM" id="SSF52172">
    <property type="entry name" value="CheY-like"/>
    <property type="match status" value="1"/>
</dbReference>
<dbReference type="SUPFAM" id="SSF101215">
    <property type="entry name" value="KaiA/RbsU domain"/>
    <property type="match status" value="1"/>
</dbReference>
<dbReference type="PROSITE" id="PS51431">
    <property type="entry name" value="KAIA_C"/>
    <property type="match status" value="1"/>
</dbReference>
<dbReference type="PROSITE" id="PS51430">
    <property type="entry name" value="KAIA_N"/>
    <property type="match status" value="1"/>
</dbReference>
<evidence type="ECO:0000250" key="1">
    <source>
        <dbReference type="UniProtKB" id="Q79PF6"/>
    </source>
</evidence>
<evidence type="ECO:0000250" key="2">
    <source>
        <dbReference type="UniProtKB" id="Q79V62"/>
    </source>
</evidence>
<evidence type="ECO:0000255" key="3">
    <source>
        <dbReference type="PROSITE-ProRule" id="PRU00760"/>
    </source>
</evidence>
<evidence type="ECO:0000255" key="4">
    <source>
        <dbReference type="PROSITE-ProRule" id="PRU00761"/>
    </source>
</evidence>
<evidence type="ECO:0000303" key="5">
    <source>
    </source>
</evidence>
<organism>
    <name type="scientific">Thermostichus vulcanus</name>
    <name type="common">Synechococcus vulcanus</name>
    <dbReference type="NCBI Taxonomy" id="32053"/>
    <lineage>
        <taxon>Bacteria</taxon>
        <taxon>Bacillati</taxon>
        <taxon>Cyanobacteriota</taxon>
        <taxon>Cyanophyceae</taxon>
        <taxon>Thermostichales</taxon>
        <taxon>Thermostichaceae</taxon>
        <taxon>Thermostichus</taxon>
    </lineage>
</organism>
<proteinExistence type="evidence at protein level"/>
<gene>
    <name evidence="5" type="primary">kaiA</name>
</gene>
<comment type="function">
    <text evidence="1">Key component of the KaiABC oscillator complex, which constitutes the main circadian regulator in cyanobacteria. Complex composition changes during the circadian cycle to control KaiC phosphorylation. KaiA stimulates KaiC autophosphorylation, while KaiB sequesters KaiA, leading to KaiC autodephosphorylation. KaiA binding to the KaiC CII domain during the subjective day yields KaiA(2-4):KaiC(6) complexes which stimulate KaiC autophosphorylation. Phospho-Ser-431 KaiC accumulation triggers binding of KaiB during the subjective night to form the KaiB(6):KaiC(6) complex, leading to changes in the output regulators CikA and SasA. KaiB(6):KaiC(6) formation exposes a site for KaiA binding on KaiB that sequesters KaiA from KaiC's CII domain, making the KaiC(6):KaiB(6):KaiA(12) complex resulting in KaiC autodephosphorylation. Complete dephosphorylation of KaiC leads to dissociation of KaiA(2):KaiB(1), completing 1 cycle of the Kai oscillator.</text>
</comment>
<comment type="function">
    <text evidence="1">Binds oxidized quinones via the N-terminal PsR domain, allowing it to sense redox changes and possibly mediate clock input.</text>
</comment>
<comment type="subunit">
    <text evidence="1">Homodimer. The KaiABC complex composition changes during the circadian cycle to control KaiC phosphorylation. Complexes KaiC(6), KaiA(2-4):KaiC(6), KaiB(6):KaiC(6) and KaiC(6):KaiB(6):KaiA(12) are among the most important forms, many form cooperatively. KaiA and CikA bind to the same region of the KaiB(fs) form and therefore compete.</text>
</comment>
<comment type="interaction">
    <interactant intactId="EBI-934195">
        <id>Q6L8K1</id>
    </interactant>
    <interactant intactId="EBI-934214">
        <id>Q6L8J9</id>
        <label>kaiC</label>
    </interactant>
    <organismsDiffer>false</organismsDiffer>
    <experiments>2</experiments>
</comment>
<comment type="domain">
    <text evidence="1 2">The N-terminal pseudoreceiver domain (PsR, approximately equal to KaiA N-terminal) binds oxidized quinones (By similarity). The KaiA C-terminal domain mediates interaction with KaiC, homodimerization, and is responsible for the clock oscillation function (By similarity).</text>
</comment>